<evidence type="ECO:0000305" key="1"/>
<organism>
    <name type="scientific">Mycobacterium tuberculosis (strain ATCC 25618 / H37Rv)</name>
    <dbReference type="NCBI Taxonomy" id="83332"/>
    <lineage>
        <taxon>Bacteria</taxon>
        <taxon>Bacillati</taxon>
        <taxon>Actinomycetota</taxon>
        <taxon>Actinomycetes</taxon>
        <taxon>Mycobacteriales</taxon>
        <taxon>Mycobacteriaceae</taxon>
        <taxon>Mycobacterium</taxon>
        <taxon>Mycobacterium tuberculosis complex</taxon>
    </lineage>
</organism>
<dbReference type="EMBL" id="AL123456">
    <property type="protein sequence ID" value="CCP43903.1"/>
    <property type="status" value="ALT_INIT"/>
    <property type="molecule type" value="Genomic_DNA"/>
</dbReference>
<dbReference type="PIR" id="E70554">
    <property type="entry name" value="E70554"/>
</dbReference>
<dbReference type="RefSeq" id="NP_215664.1">
    <property type="nucleotide sequence ID" value="NC_000962.3"/>
</dbReference>
<dbReference type="RefSeq" id="WP_003898743.1">
    <property type="nucleotide sequence ID" value="NC_018143.2"/>
</dbReference>
<dbReference type="RefSeq" id="WP_003901099.1">
    <property type="nucleotide sequence ID" value="NC_000962.3"/>
</dbReference>
<dbReference type="SMR" id="P9WM55"/>
<dbReference type="STRING" id="83332.Rv1148c"/>
<dbReference type="PaxDb" id="83332-Rv1148c"/>
<dbReference type="DNASU" id="885451"/>
<dbReference type="GeneID" id="885451"/>
<dbReference type="KEGG" id="mtu:Rv1148c"/>
<dbReference type="PATRIC" id="fig|83332.12.peg.1289"/>
<dbReference type="TubercuList" id="Rv1148c"/>
<dbReference type="eggNOG" id="COG1403">
    <property type="taxonomic scope" value="Bacteria"/>
</dbReference>
<dbReference type="InParanoid" id="P9WM55"/>
<dbReference type="OrthoDB" id="4419061at2"/>
<dbReference type="Proteomes" id="UP000001584">
    <property type="component" value="Chromosome"/>
</dbReference>
<dbReference type="GO" id="GO:0004519">
    <property type="term" value="F:endonuclease activity"/>
    <property type="evidence" value="ECO:0007669"/>
    <property type="project" value="InterPro"/>
</dbReference>
<dbReference type="GO" id="GO:0003676">
    <property type="term" value="F:nucleic acid binding"/>
    <property type="evidence" value="ECO:0007669"/>
    <property type="project" value="InterPro"/>
</dbReference>
<dbReference type="GO" id="GO:0008270">
    <property type="term" value="F:zinc ion binding"/>
    <property type="evidence" value="ECO:0007669"/>
    <property type="project" value="InterPro"/>
</dbReference>
<dbReference type="CDD" id="cd00085">
    <property type="entry name" value="HNHc"/>
    <property type="match status" value="1"/>
</dbReference>
<dbReference type="InterPro" id="IPR003870">
    <property type="entry name" value="DUF222"/>
</dbReference>
<dbReference type="InterPro" id="IPR002711">
    <property type="entry name" value="HNH"/>
</dbReference>
<dbReference type="InterPro" id="IPR003615">
    <property type="entry name" value="HNH_nuc"/>
</dbReference>
<dbReference type="Pfam" id="PF02720">
    <property type="entry name" value="DUF222"/>
    <property type="match status" value="1"/>
</dbReference>
<dbReference type="Pfam" id="PF01844">
    <property type="entry name" value="HNH"/>
    <property type="match status" value="1"/>
</dbReference>
<dbReference type="SMART" id="SM00507">
    <property type="entry name" value="HNHc"/>
    <property type="match status" value="1"/>
</dbReference>
<sequence length="454" mass="49718">MRSDTREEISAALDAYHASLSRVLDLKCDALTTPELLACLQRLEVERRRQGAAEHALINQLAGQACEEELGGTLRTALANRLHITPGEASRRIAEAEDLGERRALTGEPLPAQLTATAAAQREGKIGREHIKEIQAFFKELSAAVDLGIREAAEAQLAELATSRRPDHLHGLATQLMDWLHPDGNFSDQERARKRGITMGKQEFDGMSRISGLLTPELRATIEAVLAKLAAPGACNPDDQTPLVDDTPDADAVRRDTRSQAQRNHDAFLAALRGLLASGELGQHKGLPVTIVVSTTLKELEAATGKGVTGGGSRVPMSDLIRMASHANHYLALFDGAKPLALYHTKRLASPAQRIMLYAKDRGCSRPGCDAPAYHSEVHHVTPWTTTHRTDINDLTLACGPDNRLVEKGWKTRKNAHGDTEWLPPPHLDHGQPRINRYHHPAKILCEQDDDEPH</sequence>
<gene>
    <name type="ordered locus">Rv1148c</name>
    <name type="ORF">MTCI65.15c</name>
</gene>
<name>Y1148_MYCTU</name>
<comment type="similarity">
    <text evidence="1">Belongs to the Rv1128c/1148c/1588c/1702c/1945/3466 family.</text>
</comment>
<comment type="sequence caution" evidence="1">
    <conflict type="erroneous initiation">
        <sequence resource="EMBL-CDS" id="CCP43903"/>
    </conflict>
    <text>Extended N-terminus.</text>
</comment>
<keyword id="KW-1185">Reference proteome</keyword>
<accession>P9WM55</accession>
<accession>L0T8L3</accession>
<accession>O06548</accession>
<accession>P0A5D9</accession>
<reference key="1">
    <citation type="journal article" date="1998" name="Nature">
        <title>Deciphering the biology of Mycobacterium tuberculosis from the complete genome sequence.</title>
        <authorList>
            <person name="Cole S.T."/>
            <person name="Brosch R."/>
            <person name="Parkhill J."/>
            <person name="Garnier T."/>
            <person name="Churcher C.M."/>
            <person name="Harris D.E."/>
            <person name="Gordon S.V."/>
            <person name="Eiglmeier K."/>
            <person name="Gas S."/>
            <person name="Barry C.E. III"/>
            <person name="Tekaia F."/>
            <person name="Badcock K."/>
            <person name="Basham D."/>
            <person name="Brown D."/>
            <person name="Chillingworth T."/>
            <person name="Connor R."/>
            <person name="Davies R.M."/>
            <person name="Devlin K."/>
            <person name="Feltwell T."/>
            <person name="Gentles S."/>
            <person name="Hamlin N."/>
            <person name="Holroyd S."/>
            <person name="Hornsby T."/>
            <person name="Jagels K."/>
            <person name="Krogh A."/>
            <person name="McLean J."/>
            <person name="Moule S."/>
            <person name="Murphy L.D."/>
            <person name="Oliver S."/>
            <person name="Osborne J."/>
            <person name="Quail M.A."/>
            <person name="Rajandream M.A."/>
            <person name="Rogers J."/>
            <person name="Rutter S."/>
            <person name="Seeger K."/>
            <person name="Skelton S."/>
            <person name="Squares S."/>
            <person name="Squares R."/>
            <person name="Sulston J.E."/>
            <person name="Taylor K."/>
            <person name="Whitehead S."/>
            <person name="Barrell B.G."/>
        </authorList>
    </citation>
    <scope>NUCLEOTIDE SEQUENCE [LARGE SCALE GENOMIC DNA]</scope>
    <source>
        <strain>ATCC 25618 / H37Rv</strain>
    </source>
</reference>
<reference key="2">
    <citation type="journal article" date="2011" name="Mol. Cell. Proteomics">
        <title>Proteogenomic analysis of Mycobacterium tuberculosis by high resolution mass spectrometry.</title>
        <authorList>
            <person name="Kelkar D.S."/>
            <person name="Kumar D."/>
            <person name="Kumar P."/>
            <person name="Balakrishnan L."/>
            <person name="Muthusamy B."/>
            <person name="Yadav A.K."/>
            <person name="Shrivastava P."/>
            <person name="Marimuthu A."/>
            <person name="Anand S."/>
            <person name="Sundaram H."/>
            <person name="Kingsbury R."/>
            <person name="Harsha H.C."/>
            <person name="Nair B."/>
            <person name="Prasad T.S."/>
            <person name="Chauhan D.S."/>
            <person name="Katoch K."/>
            <person name="Katoch V.M."/>
            <person name="Kumar P."/>
            <person name="Chaerkady R."/>
            <person name="Ramachandran S."/>
            <person name="Dash D."/>
            <person name="Pandey A."/>
        </authorList>
    </citation>
    <scope>IDENTIFICATION BY MASS SPECTROMETRY [LARGE SCALE ANALYSIS]</scope>
    <source>
        <strain>ATCC 25618 / H37Rv</strain>
    </source>
</reference>
<protein>
    <recommendedName>
        <fullName>Uncharacterized protein Rv1148c</fullName>
    </recommendedName>
</protein>
<proteinExistence type="evidence at protein level"/>
<feature type="chain" id="PRO_0000103770" description="Uncharacterized protein Rv1148c">
    <location>
        <begin position="1"/>
        <end position="454"/>
    </location>
</feature>
<feature type="domain" description="HNH">
    <location>
        <begin position="364"/>
        <end position="405"/>
    </location>
</feature>